<feature type="chain" id="PRO_1000141424" description="Large ribosomal subunit protein uL1">
    <location>
        <begin position="1"/>
        <end position="230"/>
    </location>
</feature>
<protein>
    <recommendedName>
        <fullName evidence="1">Large ribosomal subunit protein uL1</fullName>
    </recommendedName>
    <alternativeName>
        <fullName evidence="2">50S ribosomal protein L1</fullName>
    </alternativeName>
</protein>
<sequence>MTQKHGKKYTAALAKVEAEKNYALNDAVALVKEIDYANFDASVEVAFKLNVDTRQADQQLRGAVVLPNGTGKDKKVIVFAQGDKAKEAEAAGADVVGAADLVAQIQGGWMDFDTAIATPDMMAQVGRVARILGPKGMMPNPKTGTVTMDVAKAVSDAKGGQVTYRTDRDGNVAVPVGRVSFEEGKLAENIKTIADTVLKARPAAVKGTYVQHVSIASTFGPAVALDLNTL</sequence>
<organism>
    <name type="scientific">Leuconostoc citreum (strain KM20)</name>
    <dbReference type="NCBI Taxonomy" id="349519"/>
    <lineage>
        <taxon>Bacteria</taxon>
        <taxon>Bacillati</taxon>
        <taxon>Bacillota</taxon>
        <taxon>Bacilli</taxon>
        <taxon>Lactobacillales</taxon>
        <taxon>Lactobacillaceae</taxon>
        <taxon>Leuconostoc</taxon>
    </lineage>
</organism>
<keyword id="KW-1185">Reference proteome</keyword>
<keyword id="KW-0678">Repressor</keyword>
<keyword id="KW-0687">Ribonucleoprotein</keyword>
<keyword id="KW-0689">Ribosomal protein</keyword>
<keyword id="KW-0694">RNA-binding</keyword>
<keyword id="KW-0699">rRNA-binding</keyword>
<keyword id="KW-0810">Translation regulation</keyword>
<keyword id="KW-0820">tRNA-binding</keyword>
<gene>
    <name evidence="1" type="primary">rplA</name>
    <name type="ordered locus">LCK_01523</name>
</gene>
<comment type="function">
    <text evidence="1">Binds directly to 23S rRNA. The L1 stalk is quite mobile in the ribosome, and is involved in E site tRNA release.</text>
</comment>
<comment type="function">
    <text evidence="1">Protein L1 is also a translational repressor protein, it controls the translation of the L11 operon by binding to its mRNA.</text>
</comment>
<comment type="subunit">
    <text evidence="1">Part of the 50S ribosomal subunit.</text>
</comment>
<comment type="similarity">
    <text evidence="1">Belongs to the universal ribosomal protein uL1 family.</text>
</comment>
<name>RL1_LEUCK</name>
<accession>B1MVU3</accession>
<reference key="1">
    <citation type="journal article" date="2008" name="J. Bacteriol.">
        <title>Complete genome sequence of Leuconostoc citreum KM20.</title>
        <authorList>
            <person name="Kim J.F."/>
            <person name="Jeong H."/>
            <person name="Lee J.-S."/>
            <person name="Choi S.-H."/>
            <person name="Ha M."/>
            <person name="Hur C.-G."/>
            <person name="Kim J.-S."/>
            <person name="Lee S."/>
            <person name="Park H.-S."/>
            <person name="Park Y.-H."/>
            <person name="Oh T.K."/>
        </authorList>
    </citation>
    <scope>NUCLEOTIDE SEQUENCE [LARGE SCALE GENOMIC DNA]</scope>
    <source>
        <strain>KM20</strain>
    </source>
</reference>
<proteinExistence type="inferred from homology"/>
<dbReference type="EMBL" id="DQ489736">
    <property type="protein sequence ID" value="ACA83347.1"/>
    <property type="molecule type" value="Genomic_DNA"/>
</dbReference>
<dbReference type="RefSeq" id="WP_004899250.1">
    <property type="nucleotide sequence ID" value="NC_010471.1"/>
</dbReference>
<dbReference type="SMR" id="B1MVU3"/>
<dbReference type="STRING" id="349519.LCK_01523"/>
<dbReference type="GeneID" id="61101446"/>
<dbReference type="KEGG" id="lci:LCK_01523"/>
<dbReference type="eggNOG" id="COG0081">
    <property type="taxonomic scope" value="Bacteria"/>
</dbReference>
<dbReference type="HOGENOM" id="CLU_062853_0_0_9"/>
<dbReference type="OrthoDB" id="9803740at2"/>
<dbReference type="Proteomes" id="UP000002166">
    <property type="component" value="Chromosome"/>
</dbReference>
<dbReference type="GO" id="GO:0015934">
    <property type="term" value="C:large ribosomal subunit"/>
    <property type="evidence" value="ECO:0007669"/>
    <property type="project" value="InterPro"/>
</dbReference>
<dbReference type="GO" id="GO:0019843">
    <property type="term" value="F:rRNA binding"/>
    <property type="evidence" value="ECO:0007669"/>
    <property type="project" value="UniProtKB-UniRule"/>
</dbReference>
<dbReference type="GO" id="GO:0003735">
    <property type="term" value="F:structural constituent of ribosome"/>
    <property type="evidence" value="ECO:0007669"/>
    <property type="project" value="InterPro"/>
</dbReference>
<dbReference type="GO" id="GO:0000049">
    <property type="term" value="F:tRNA binding"/>
    <property type="evidence" value="ECO:0007669"/>
    <property type="project" value="UniProtKB-KW"/>
</dbReference>
<dbReference type="GO" id="GO:0006417">
    <property type="term" value="P:regulation of translation"/>
    <property type="evidence" value="ECO:0007669"/>
    <property type="project" value="UniProtKB-KW"/>
</dbReference>
<dbReference type="GO" id="GO:0006412">
    <property type="term" value="P:translation"/>
    <property type="evidence" value="ECO:0007669"/>
    <property type="project" value="UniProtKB-UniRule"/>
</dbReference>
<dbReference type="CDD" id="cd00403">
    <property type="entry name" value="Ribosomal_L1"/>
    <property type="match status" value="1"/>
</dbReference>
<dbReference type="FunFam" id="3.40.50.790:FF:000001">
    <property type="entry name" value="50S ribosomal protein L1"/>
    <property type="match status" value="1"/>
</dbReference>
<dbReference type="Gene3D" id="3.30.190.20">
    <property type="match status" value="1"/>
</dbReference>
<dbReference type="Gene3D" id="3.40.50.790">
    <property type="match status" value="1"/>
</dbReference>
<dbReference type="HAMAP" id="MF_01318_B">
    <property type="entry name" value="Ribosomal_uL1_B"/>
    <property type="match status" value="1"/>
</dbReference>
<dbReference type="InterPro" id="IPR005878">
    <property type="entry name" value="Ribosom_uL1_bac-type"/>
</dbReference>
<dbReference type="InterPro" id="IPR002143">
    <property type="entry name" value="Ribosomal_uL1"/>
</dbReference>
<dbReference type="InterPro" id="IPR023674">
    <property type="entry name" value="Ribosomal_uL1-like"/>
</dbReference>
<dbReference type="InterPro" id="IPR028364">
    <property type="entry name" value="Ribosomal_uL1/biogenesis"/>
</dbReference>
<dbReference type="InterPro" id="IPR016095">
    <property type="entry name" value="Ribosomal_uL1_3-a/b-sand"/>
</dbReference>
<dbReference type="InterPro" id="IPR023673">
    <property type="entry name" value="Ribosomal_uL1_CS"/>
</dbReference>
<dbReference type="NCBIfam" id="TIGR01169">
    <property type="entry name" value="rplA_bact"/>
    <property type="match status" value="1"/>
</dbReference>
<dbReference type="PANTHER" id="PTHR36427">
    <property type="entry name" value="54S RIBOSOMAL PROTEIN L1, MITOCHONDRIAL"/>
    <property type="match status" value="1"/>
</dbReference>
<dbReference type="PANTHER" id="PTHR36427:SF3">
    <property type="entry name" value="LARGE RIBOSOMAL SUBUNIT PROTEIN UL1M"/>
    <property type="match status" value="1"/>
</dbReference>
<dbReference type="Pfam" id="PF00687">
    <property type="entry name" value="Ribosomal_L1"/>
    <property type="match status" value="1"/>
</dbReference>
<dbReference type="PIRSF" id="PIRSF002155">
    <property type="entry name" value="Ribosomal_L1"/>
    <property type="match status" value="1"/>
</dbReference>
<dbReference type="SUPFAM" id="SSF56808">
    <property type="entry name" value="Ribosomal protein L1"/>
    <property type="match status" value="1"/>
</dbReference>
<dbReference type="PROSITE" id="PS01199">
    <property type="entry name" value="RIBOSOMAL_L1"/>
    <property type="match status" value="1"/>
</dbReference>
<evidence type="ECO:0000255" key="1">
    <source>
        <dbReference type="HAMAP-Rule" id="MF_01318"/>
    </source>
</evidence>
<evidence type="ECO:0000305" key="2"/>